<organism>
    <name type="scientific">Aedes aegypti</name>
    <name type="common">Yellowfever mosquito</name>
    <name type="synonym">Culex aegypti</name>
    <dbReference type="NCBI Taxonomy" id="7159"/>
    <lineage>
        <taxon>Eukaryota</taxon>
        <taxon>Metazoa</taxon>
        <taxon>Ecdysozoa</taxon>
        <taxon>Arthropoda</taxon>
        <taxon>Hexapoda</taxon>
        <taxon>Insecta</taxon>
        <taxon>Pterygota</taxon>
        <taxon>Neoptera</taxon>
        <taxon>Endopterygota</taxon>
        <taxon>Diptera</taxon>
        <taxon>Nematocera</taxon>
        <taxon>Culicoidea</taxon>
        <taxon>Culicidae</taxon>
        <taxon>Culicinae</taxon>
        <taxon>Aedini</taxon>
        <taxon>Aedes</taxon>
        <taxon>Stegomyia</taxon>
    </lineage>
</organism>
<keyword id="KW-0963">Cytoplasm</keyword>
<keyword id="KW-0396">Initiation factor</keyword>
<keyword id="KW-0648">Protein biosynthesis</keyword>
<keyword id="KW-1185">Reference proteome</keyword>
<protein>
    <recommendedName>
        <fullName evidence="1">Eukaryotic translation initiation factor 3 subunit F</fullName>
        <shortName evidence="1">eIF3f</shortName>
    </recommendedName>
    <alternativeName>
        <fullName evidence="1">Eukaryotic translation initiation factor 3 subunit 5</fullName>
    </alternativeName>
</protein>
<feature type="chain" id="PRO_0000364293" description="Eukaryotic translation initiation factor 3 subunit F">
    <location>
        <begin position="1"/>
        <end position="287"/>
    </location>
</feature>
<feature type="domain" description="MPN" evidence="2">
    <location>
        <begin position="12"/>
        <end position="142"/>
    </location>
</feature>
<accession>Q1HR47</accession>
<dbReference type="EMBL" id="DQ440247">
    <property type="protein sequence ID" value="ABF18280.1"/>
    <property type="molecule type" value="mRNA"/>
</dbReference>
<dbReference type="EMBL" id="CH477554">
    <property type="protein sequence ID" value="EAT39069.1"/>
    <property type="molecule type" value="Genomic_DNA"/>
</dbReference>
<dbReference type="SMR" id="Q1HR47"/>
<dbReference type="FunCoup" id="Q1HR47">
    <property type="interactions" value="2161"/>
</dbReference>
<dbReference type="STRING" id="7159.Q1HR47"/>
<dbReference type="PaxDb" id="7159-AAEL009101-PA"/>
<dbReference type="EnsemblMetazoa" id="AAEL009101-RA">
    <property type="protein sequence ID" value="AAEL009101-PA"/>
    <property type="gene ID" value="AAEL009101"/>
</dbReference>
<dbReference type="GeneID" id="5571466"/>
<dbReference type="KEGG" id="aag:5571466"/>
<dbReference type="CTD" id="40587"/>
<dbReference type="VEuPathDB" id="VectorBase:AAEL009101"/>
<dbReference type="eggNOG" id="KOG2975">
    <property type="taxonomic scope" value="Eukaryota"/>
</dbReference>
<dbReference type="HOGENOM" id="CLU_027018_0_1_1"/>
<dbReference type="InParanoid" id="Q1HR47"/>
<dbReference type="OMA" id="EYFVHFH"/>
<dbReference type="OrthoDB" id="25498at2759"/>
<dbReference type="PhylomeDB" id="Q1HR47"/>
<dbReference type="Proteomes" id="UP000008820">
    <property type="component" value="Chromosome 3"/>
</dbReference>
<dbReference type="Proteomes" id="UP000682892">
    <property type="component" value="Unassembled WGS sequence"/>
</dbReference>
<dbReference type="GO" id="GO:0016282">
    <property type="term" value="C:eukaryotic 43S preinitiation complex"/>
    <property type="evidence" value="ECO:0007669"/>
    <property type="project" value="UniProtKB-UniRule"/>
</dbReference>
<dbReference type="GO" id="GO:0033290">
    <property type="term" value="C:eukaryotic 48S preinitiation complex"/>
    <property type="evidence" value="ECO:0007669"/>
    <property type="project" value="UniProtKB-UniRule"/>
</dbReference>
<dbReference type="GO" id="GO:0071541">
    <property type="term" value="C:eukaryotic translation initiation factor 3 complex, eIF3m"/>
    <property type="evidence" value="ECO:0007669"/>
    <property type="project" value="TreeGrafter"/>
</dbReference>
<dbReference type="GO" id="GO:0008237">
    <property type="term" value="F:metallopeptidase activity"/>
    <property type="evidence" value="ECO:0007669"/>
    <property type="project" value="InterPro"/>
</dbReference>
<dbReference type="GO" id="GO:0003743">
    <property type="term" value="F:translation initiation factor activity"/>
    <property type="evidence" value="ECO:0007669"/>
    <property type="project" value="UniProtKB-UniRule"/>
</dbReference>
<dbReference type="GO" id="GO:0031369">
    <property type="term" value="F:translation initiation factor binding"/>
    <property type="evidence" value="ECO:0007669"/>
    <property type="project" value="InterPro"/>
</dbReference>
<dbReference type="GO" id="GO:0001732">
    <property type="term" value="P:formation of cytoplasmic translation initiation complex"/>
    <property type="evidence" value="ECO:0007669"/>
    <property type="project" value="UniProtKB-UniRule"/>
</dbReference>
<dbReference type="CDD" id="cd08064">
    <property type="entry name" value="MPN_eIF3f"/>
    <property type="match status" value="1"/>
</dbReference>
<dbReference type="FunFam" id="3.40.140.10:FF:000014">
    <property type="entry name" value="Eukaryotic translation initiation factor 3 subunit F"/>
    <property type="match status" value="1"/>
</dbReference>
<dbReference type="Gene3D" id="3.40.140.10">
    <property type="entry name" value="Cytidine Deaminase, domain 2"/>
    <property type="match status" value="1"/>
</dbReference>
<dbReference type="HAMAP" id="MF_03005">
    <property type="entry name" value="eIF3f"/>
    <property type="match status" value="1"/>
</dbReference>
<dbReference type="InterPro" id="IPR027531">
    <property type="entry name" value="eIF3f"/>
</dbReference>
<dbReference type="InterPro" id="IPR024969">
    <property type="entry name" value="EIF3F/CSN6-like_C"/>
</dbReference>
<dbReference type="InterPro" id="IPR000555">
    <property type="entry name" value="JAMM/MPN+_dom"/>
</dbReference>
<dbReference type="InterPro" id="IPR037518">
    <property type="entry name" value="MPN"/>
</dbReference>
<dbReference type="PANTHER" id="PTHR10540:SF6">
    <property type="entry name" value="EUKARYOTIC TRANSLATION INITIATION FACTOR 3 SUBUNIT F"/>
    <property type="match status" value="1"/>
</dbReference>
<dbReference type="PANTHER" id="PTHR10540">
    <property type="entry name" value="EUKARYOTIC TRANSLATION INITIATION FACTOR 3 SUBUNIT F-RELATED"/>
    <property type="match status" value="1"/>
</dbReference>
<dbReference type="Pfam" id="PF01398">
    <property type="entry name" value="JAB"/>
    <property type="match status" value="1"/>
</dbReference>
<dbReference type="Pfam" id="PF13012">
    <property type="entry name" value="MitMem_reg"/>
    <property type="match status" value="1"/>
</dbReference>
<dbReference type="SMART" id="SM00232">
    <property type="entry name" value="JAB_MPN"/>
    <property type="match status" value="1"/>
</dbReference>
<dbReference type="PROSITE" id="PS50249">
    <property type="entry name" value="MPN"/>
    <property type="match status" value="1"/>
</dbReference>
<gene>
    <name evidence="1" type="primary">eIF3-S5</name>
    <name type="ORF">AAEL009101</name>
</gene>
<evidence type="ECO:0000255" key="1">
    <source>
        <dbReference type="HAMAP-Rule" id="MF_03005"/>
    </source>
</evidence>
<evidence type="ECO:0000255" key="2">
    <source>
        <dbReference type="PROSITE-ProRule" id="PRU01182"/>
    </source>
</evidence>
<name>EIF3F_AEDAE</name>
<proteinExistence type="evidence at transcript level"/>
<reference key="1">
    <citation type="journal article" date="2007" name="BMC Genomics">
        <title>An annotated catalogue of salivary gland transcripts in the adult female mosquito, Aedes aegypti.</title>
        <authorList>
            <person name="Ribeiro J.M.C."/>
            <person name="Arca B."/>
            <person name="Lombardo F."/>
            <person name="Calvo E."/>
            <person name="Phan V.M."/>
            <person name="Chandra P.K."/>
            <person name="Wikel S.K."/>
        </authorList>
    </citation>
    <scope>NUCLEOTIDE SEQUENCE [LARGE SCALE MRNA]</scope>
    <source>
        <strain>Black-eyed Liverpool</strain>
        <tissue>Salivary gland</tissue>
    </source>
</reference>
<reference key="2">
    <citation type="journal article" date="2007" name="Science">
        <title>Genome sequence of Aedes aegypti, a major arbovirus vector.</title>
        <authorList>
            <person name="Nene V."/>
            <person name="Wortman J.R."/>
            <person name="Lawson D."/>
            <person name="Haas B.J."/>
            <person name="Kodira C.D."/>
            <person name="Tu Z.J."/>
            <person name="Loftus B.J."/>
            <person name="Xi Z."/>
            <person name="Megy K."/>
            <person name="Grabherr M."/>
            <person name="Ren Q."/>
            <person name="Zdobnov E.M."/>
            <person name="Lobo N.F."/>
            <person name="Campbell K.S."/>
            <person name="Brown S.E."/>
            <person name="Bonaldo M.F."/>
            <person name="Zhu J."/>
            <person name="Sinkins S.P."/>
            <person name="Hogenkamp D.G."/>
            <person name="Amedeo P."/>
            <person name="Arensburger P."/>
            <person name="Atkinson P.W."/>
            <person name="Bidwell S.L."/>
            <person name="Biedler J."/>
            <person name="Birney E."/>
            <person name="Bruggner R.V."/>
            <person name="Costas J."/>
            <person name="Coy M.R."/>
            <person name="Crabtree J."/>
            <person name="Crawford M."/>
            <person name="DeBruyn B."/>
            <person name="DeCaprio D."/>
            <person name="Eiglmeier K."/>
            <person name="Eisenstadt E."/>
            <person name="El-Dorry H."/>
            <person name="Gelbart W.M."/>
            <person name="Gomes S.L."/>
            <person name="Hammond M."/>
            <person name="Hannick L.I."/>
            <person name="Hogan J.R."/>
            <person name="Holmes M.H."/>
            <person name="Jaffe D."/>
            <person name="Johnston S.J."/>
            <person name="Kennedy R.C."/>
            <person name="Koo H."/>
            <person name="Kravitz S."/>
            <person name="Kriventseva E.V."/>
            <person name="Kulp D."/>
            <person name="Labutti K."/>
            <person name="Lee E."/>
            <person name="Li S."/>
            <person name="Lovin D.D."/>
            <person name="Mao C."/>
            <person name="Mauceli E."/>
            <person name="Menck C.F."/>
            <person name="Miller J.R."/>
            <person name="Montgomery P."/>
            <person name="Mori A."/>
            <person name="Nascimento A.L."/>
            <person name="Naveira H.F."/>
            <person name="Nusbaum C."/>
            <person name="O'Leary S.B."/>
            <person name="Orvis J."/>
            <person name="Pertea M."/>
            <person name="Quesneville H."/>
            <person name="Reidenbach K.R."/>
            <person name="Rogers Y.-H.C."/>
            <person name="Roth C.W."/>
            <person name="Schneider J.R."/>
            <person name="Schatz M."/>
            <person name="Shumway M."/>
            <person name="Stanke M."/>
            <person name="Stinson E.O."/>
            <person name="Tubio J.M.C."/>
            <person name="Vanzee J.P."/>
            <person name="Verjovski-Almeida S."/>
            <person name="Werner D."/>
            <person name="White O.R."/>
            <person name="Wyder S."/>
            <person name="Zeng Q."/>
            <person name="Zhao Q."/>
            <person name="Zhao Y."/>
            <person name="Hill C.A."/>
            <person name="Raikhel A.S."/>
            <person name="Soares M.B."/>
            <person name="Knudson D.L."/>
            <person name="Lee N.H."/>
            <person name="Galagan J."/>
            <person name="Salzberg S.L."/>
            <person name="Paulsen I.T."/>
            <person name="Dimopoulos G."/>
            <person name="Collins F.H."/>
            <person name="Bruce B."/>
            <person name="Fraser-Liggett C.M."/>
            <person name="Severson D.W."/>
        </authorList>
    </citation>
    <scope>NUCLEOTIDE SEQUENCE [LARGE SCALE GENOMIC DNA]</scope>
    <source>
        <strain>LVPib12</strain>
    </source>
</reference>
<sequence>MSTINLPLNLTVRVHPVVLFQIVDAYERRNADSERVIGTLLGSVDKGVVEVTNCFCVPHKEHADQVEAELGYASDLYDLNRRVNPSENIVGWWATGQEVTNHSSVIHEYYARECNNPIHLTLDTSLSAARMGIKAYVCVSLGVPGGKTGCMFTPINVEISSYEPEVVGLQLCSKTIGVQQNASRPRTVSPMLDLAQITEASDKLLTLLGEVLNYVEDVLAEKQQPDNSVGRALLDLIHSVPNMTSDQFAQMFNSNVKDLLMVVTLSQLIKTQLQLNEKLTSLTSFIN</sequence>
<comment type="function">
    <text evidence="1">Component of the eukaryotic translation initiation factor 3 (eIF-3) complex, which is involved in protein synthesis of a specialized repertoire of mRNAs and, together with other initiation factors, stimulates binding of mRNA and methionyl-tRNAi to the 40S ribosome. The eIF-3 complex specifically targets and initiates translation of a subset of mRNAs involved in cell proliferation.</text>
</comment>
<comment type="subunit">
    <text evidence="1">Component of the eukaryotic translation initiation factor 3 (eIF-3) complex.</text>
</comment>
<comment type="subcellular location">
    <subcellularLocation>
        <location evidence="1">Cytoplasm</location>
    </subcellularLocation>
</comment>
<comment type="similarity">
    <text evidence="1">Belongs to the eIF-3 subunit F family.</text>
</comment>